<evidence type="ECO:0000250" key="1">
    <source>
        <dbReference type="UniProtKB" id="P02070"/>
    </source>
</evidence>
<evidence type="ECO:0000250" key="2">
    <source>
        <dbReference type="UniProtKB" id="P02086"/>
    </source>
</evidence>
<evidence type="ECO:0000250" key="3">
    <source>
        <dbReference type="UniProtKB" id="P68871"/>
    </source>
</evidence>
<evidence type="ECO:0000255" key="4">
    <source>
        <dbReference type="PROSITE-ProRule" id="PRU00238"/>
    </source>
</evidence>
<evidence type="ECO:0000269" key="5">
    <source>
    </source>
</evidence>
<evidence type="ECO:0000303" key="6">
    <source>
    </source>
</evidence>
<evidence type="ECO:0000305" key="7"/>
<sequence>VHLSADEKNALATLWGKVNPDELGGEALGRLLVVYPWTQRFFDSFGDLSSATAVMGNPKVKAHGKKVLDSFSDGLKHLDNLKGTFSSLSELHCDKLHVDPENFRLLGNELVLVLALHLGKDFTPQVQAAFQKVVAGVANALAHKYH</sequence>
<proteinExistence type="evidence at protein level"/>
<reference evidence="7" key="1">
    <citation type="journal article" date="2012" name="Biol. Chem.">
        <title>Development of a host blood meal database: de novo sequencing of hemoglobin from nine small mammals using mass spectrometry.</title>
        <authorList>
            <person name="Laskay U.A."/>
            <person name="Burg J."/>
            <person name="Kaleta E.J."/>
            <person name="Vilcins I.M."/>
            <person name="Telford Iii S.R."/>
            <person name="Barbour A.G."/>
            <person name="Wysocki V.H."/>
        </authorList>
    </citation>
    <scope>PROTEIN SEQUENCE</scope>
    <source>
        <tissue evidence="5">Erythrocyte</tissue>
    </source>
</reference>
<organism>
    <name type="scientific">Sciurus carolinensis</name>
    <name type="common">Eastern gray squirrel</name>
    <dbReference type="NCBI Taxonomy" id="30640"/>
    <lineage>
        <taxon>Eukaryota</taxon>
        <taxon>Metazoa</taxon>
        <taxon>Chordata</taxon>
        <taxon>Craniata</taxon>
        <taxon>Vertebrata</taxon>
        <taxon>Euteleostomi</taxon>
        <taxon>Mammalia</taxon>
        <taxon>Eutheria</taxon>
        <taxon>Euarchontoglires</taxon>
        <taxon>Glires</taxon>
        <taxon>Rodentia</taxon>
        <taxon>Sciuromorpha</taxon>
        <taxon>Sciuridae</taxon>
        <taxon>Sciurinae</taxon>
        <taxon>Sciurini</taxon>
        <taxon>Sciurus</taxon>
    </lineage>
</organism>
<keyword id="KW-0007">Acetylation</keyword>
<keyword id="KW-0903">Direct protein sequencing</keyword>
<keyword id="KW-0349">Heme</keyword>
<keyword id="KW-0408">Iron</keyword>
<keyword id="KW-0479">Metal-binding</keyword>
<keyword id="KW-0561">Oxygen transport</keyword>
<keyword id="KW-0597">Phosphoprotein</keyword>
<keyword id="KW-0702">S-nitrosylation</keyword>
<keyword id="KW-0813">Transport</keyword>
<protein>
    <recommendedName>
        <fullName evidence="6">Hemoglobin subunit beta</fullName>
    </recommendedName>
</protein>
<feature type="chain" id="PRO_0000415597" description="Hemoglobin subunit beta">
    <location>
        <begin position="1"/>
        <end position="146"/>
    </location>
</feature>
<feature type="domain" description="Globin" evidence="4">
    <location>
        <begin position="2"/>
        <end position="146"/>
    </location>
</feature>
<feature type="binding site" description="distal binding residue" evidence="1 4">
    <location>
        <position position="63"/>
    </location>
    <ligand>
        <name>heme b</name>
        <dbReference type="ChEBI" id="CHEBI:60344"/>
    </ligand>
    <ligandPart>
        <name>Fe</name>
        <dbReference type="ChEBI" id="CHEBI:18248"/>
    </ligandPart>
</feature>
<feature type="binding site" description="proximal binding residue" evidence="1 4">
    <location>
        <position position="92"/>
    </location>
    <ligand>
        <name>heme b</name>
        <dbReference type="ChEBI" id="CHEBI:60344"/>
    </ligand>
    <ligandPart>
        <name>Fe</name>
        <dbReference type="ChEBI" id="CHEBI:18248"/>
    </ligandPart>
</feature>
<feature type="modified residue" description="N-acetylvaline" evidence="2">
    <location>
        <position position="1"/>
    </location>
</feature>
<feature type="modified residue" description="Phosphoserine" evidence="3">
    <location>
        <position position="44"/>
    </location>
</feature>
<feature type="modified residue" description="N6-acetyllysine" evidence="3">
    <location>
        <position position="59"/>
    </location>
</feature>
<feature type="modified residue" description="N6-acetyllysine" evidence="3">
    <location>
        <position position="82"/>
    </location>
</feature>
<feature type="modified residue" description="S-nitrosocysteine" evidence="3">
    <location>
        <position position="93"/>
    </location>
</feature>
<feature type="modified residue" description="N6-acetyllysine" evidence="3">
    <location>
        <position position="144"/>
    </location>
</feature>
<feature type="unsure residue" description="L or I" evidence="5">
    <location>
        <position position="3"/>
    </location>
</feature>
<feature type="unsure residue" description="L or I" evidence="5">
    <location>
        <position position="11"/>
    </location>
</feature>
<feature type="unsure residue" description="L or I" evidence="5">
    <location>
        <position position="14"/>
    </location>
</feature>
<feature type="unsure residue" description="L or I" evidence="5">
    <location>
        <position position="23"/>
    </location>
</feature>
<feature type="unsure residue" description="L or I" evidence="5">
    <location>
        <position position="28"/>
    </location>
</feature>
<feature type="unsure residue" description="L or I" evidence="5">
    <location>
        <position position="31"/>
    </location>
</feature>
<feature type="unsure residue" description="L or I" evidence="5">
    <location>
        <position position="32"/>
    </location>
</feature>
<feature type="unsure residue" description="L or I" evidence="5">
    <location>
        <position position="48"/>
    </location>
</feature>
<feature type="unsure residue" description="L or I" evidence="5">
    <location>
        <position position="68"/>
    </location>
</feature>
<feature type="unsure residue" description="L or I" evidence="5">
    <location>
        <position position="75"/>
    </location>
</feature>
<feature type="unsure residue" description="L or I" evidence="5">
    <location>
        <position position="78"/>
    </location>
</feature>
<feature type="unsure residue" description="L or I" evidence="5">
    <location>
        <position position="81"/>
    </location>
</feature>
<feature type="unsure residue" description="L or I" evidence="5">
    <location>
        <position position="88"/>
    </location>
</feature>
<feature type="unsure residue" description="L or I" evidence="5">
    <location>
        <position position="91"/>
    </location>
</feature>
<feature type="unsure residue" description="L or I" evidence="5">
    <location>
        <position position="96"/>
    </location>
</feature>
<feature type="unsure residue" description="L or I" evidence="5">
    <location>
        <position position="105"/>
    </location>
</feature>
<feature type="unsure residue" description="L or I" evidence="5">
    <location>
        <position position="106"/>
    </location>
</feature>
<feature type="unsure residue" description="L or I" evidence="5">
    <location>
        <position position="110"/>
    </location>
</feature>
<feature type="unsure residue" description="L or I" evidence="5">
    <location>
        <position position="112"/>
    </location>
</feature>
<feature type="unsure residue" description="L or I" evidence="5">
    <location>
        <position position="114"/>
    </location>
</feature>
<feature type="unsure residue" description="L or I" evidence="5">
    <location>
        <position position="116"/>
    </location>
</feature>
<feature type="unsure residue" description="L or I" evidence="5">
    <location>
        <position position="118"/>
    </location>
</feature>
<feature type="unsure residue" description="L or I" evidence="5">
    <location>
        <position position="141"/>
    </location>
</feature>
<accession>B3EWD2</accession>
<comment type="function">
    <text evidence="7">Involved in oxygen transport from the lung to the various peripheral tissues.</text>
</comment>
<comment type="subunit">
    <text evidence="7">Heterotetramer of two alpha chains and two beta chains.</text>
</comment>
<comment type="tissue specificity">
    <text evidence="7">Red blood cells.</text>
</comment>
<comment type="similarity">
    <text evidence="4">Belongs to the globin family.</text>
</comment>
<name>HBB_SCICA</name>
<dbReference type="SMR" id="B3EWD2"/>
<dbReference type="GO" id="GO:0072562">
    <property type="term" value="C:blood microparticle"/>
    <property type="evidence" value="ECO:0007669"/>
    <property type="project" value="TreeGrafter"/>
</dbReference>
<dbReference type="GO" id="GO:0031838">
    <property type="term" value="C:haptoglobin-hemoglobin complex"/>
    <property type="evidence" value="ECO:0007669"/>
    <property type="project" value="TreeGrafter"/>
</dbReference>
<dbReference type="GO" id="GO:0005833">
    <property type="term" value="C:hemoglobin complex"/>
    <property type="evidence" value="ECO:0007669"/>
    <property type="project" value="InterPro"/>
</dbReference>
<dbReference type="GO" id="GO:0031720">
    <property type="term" value="F:haptoglobin binding"/>
    <property type="evidence" value="ECO:0007669"/>
    <property type="project" value="TreeGrafter"/>
</dbReference>
<dbReference type="GO" id="GO:0020037">
    <property type="term" value="F:heme binding"/>
    <property type="evidence" value="ECO:0007669"/>
    <property type="project" value="InterPro"/>
</dbReference>
<dbReference type="GO" id="GO:0031721">
    <property type="term" value="F:hemoglobin alpha binding"/>
    <property type="evidence" value="ECO:0007669"/>
    <property type="project" value="TreeGrafter"/>
</dbReference>
<dbReference type="GO" id="GO:0046872">
    <property type="term" value="F:metal ion binding"/>
    <property type="evidence" value="ECO:0007669"/>
    <property type="project" value="UniProtKB-KW"/>
</dbReference>
<dbReference type="GO" id="GO:0043177">
    <property type="term" value="F:organic acid binding"/>
    <property type="evidence" value="ECO:0007669"/>
    <property type="project" value="TreeGrafter"/>
</dbReference>
<dbReference type="GO" id="GO:0019825">
    <property type="term" value="F:oxygen binding"/>
    <property type="evidence" value="ECO:0007669"/>
    <property type="project" value="InterPro"/>
</dbReference>
<dbReference type="GO" id="GO:0005344">
    <property type="term" value="F:oxygen carrier activity"/>
    <property type="evidence" value="ECO:0007669"/>
    <property type="project" value="UniProtKB-KW"/>
</dbReference>
<dbReference type="GO" id="GO:0004601">
    <property type="term" value="F:peroxidase activity"/>
    <property type="evidence" value="ECO:0007669"/>
    <property type="project" value="TreeGrafter"/>
</dbReference>
<dbReference type="GO" id="GO:0042744">
    <property type="term" value="P:hydrogen peroxide catabolic process"/>
    <property type="evidence" value="ECO:0007669"/>
    <property type="project" value="TreeGrafter"/>
</dbReference>
<dbReference type="CDD" id="cd08925">
    <property type="entry name" value="Hb-beta-like"/>
    <property type="match status" value="1"/>
</dbReference>
<dbReference type="FunFam" id="1.10.490.10:FF:000001">
    <property type="entry name" value="Hemoglobin subunit beta"/>
    <property type="match status" value="1"/>
</dbReference>
<dbReference type="Gene3D" id="1.10.490.10">
    <property type="entry name" value="Globins"/>
    <property type="match status" value="1"/>
</dbReference>
<dbReference type="InterPro" id="IPR000971">
    <property type="entry name" value="Globin"/>
</dbReference>
<dbReference type="InterPro" id="IPR009050">
    <property type="entry name" value="Globin-like_sf"/>
</dbReference>
<dbReference type="InterPro" id="IPR012292">
    <property type="entry name" value="Globin/Proto"/>
</dbReference>
<dbReference type="InterPro" id="IPR002337">
    <property type="entry name" value="Hemoglobin_b"/>
</dbReference>
<dbReference type="InterPro" id="IPR050056">
    <property type="entry name" value="Hemoglobin_oxygen_transport"/>
</dbReference>
<dbReference type="PANTHER" id="PTHR11442">
    <property type="entry name" value="HEMOGLOBIN FAMILY MEMBER"/>
    <property type="match status" value="1"/>
</dbReference>
<dbReference type="PANTHER" id="PTHR11442:SF42">
    <property type="entry name" value="HEMOGLOBIN SUBUNIT BETA"/>
    <property type="match status" value="1"/>
</dbReference>
<dbReference type="Pfam" id="PF00042">
    <property type="entry name" value="Globin"/>
    <property type="match status" value="1"/>
</dbReference>
<dbReference type="PRINTS" id="PR00814">
    <property type="entry name" value="BETAHAEM"/>
</dbReference>
<dbReference type="SUPFAM" id="SSF46458">
    <property type="entry name" value="Globin-like"/>
    <property type="match status" value="1"/>
</dbReference>
<dbReference type="PROSITE" id="PS01033">
    <property type="entry name" value="GLOBIN"/>
    <property type="match status" value="1"/>
</dbReference>